<gene>
    <name evidence="7" type="primary">KDSB</name>
    <name evidence="5" type="synonym">CKS</name>
    <name evidence="6" type="synonym">KDO1</name>
    <name evidence="10" type="ordered locus">At1g53000</name>
    <name evidence="11" type="ORF">F14G24.28</name>
</gene>
<name>KDSB_ARATH</name>
<protein>
    <recommendedName>
        <fullName evidence="5">3-deoxy-manno-octulosonate cytidylyltransferase, mitochondrial</fullName>
        <ecNumber evidence="2">2.7.7.38</ecNumber>
    </recommendedName>
    <alternativeName>
        <fullName evidence="6">CMP-2-keto-3-deoxyoctulosonic acid synthase</fullName>
        <shortName evidence="5">AtCKS</shortName>
        <shortName evidence="6">CMP-KDO synthase</shortName>
    </alternativeName>
</protein>
<comment type="function">
    <text evidence="2 3">Catalyzes the production of the sugar nucleotide CMP-3-deoxy-D-manno-octulosonate (CMP-KDO). CTP is the preferred nucleotide donor, but it can partially be replaced with UTP. Activates KDO during the biosynthesis of rhamnogalacturonan II (RG-II), a structurally complex pectic polysaccharide of the primary cell wall. RG-II is essential for the cell wall integrity of rapidly growing tissues and pollen tube growth and elongation.</text>
</comment>
<comment type="catalytic activity">
    <reaction evidence="2">
        <text>3-deoxy-alpha-D-manno-oct-2-ulosonate + CTP = CMP-3-deoxy-beta-D-manno-octulosonate + diphosphate</text>
        <dbReference type="Rhea" id="RHEA:23448"/>
        <dbReference type="ChEBI" id="CHEBI:33019"/>
        <dbReference type="ChEBI" id="CHEBI:37563"/>
        <dbReference type="ChEBI" id="CHEBI:85986"/>
        <dbReference type="ChEBI" id="CHEBI:85987"/>
        <dbReference type="EC" id="2.7.7.38"/>
    </reaction>
</comment>
<comment type="cofactor">
    <cofactor evidence="2">
        <name>Mg(2+)</name>
        <dbReference type="ChEBI" id="CHEBI:18420"/>
    </cofactor>
</comment>
<comment type="activity regulation">
    <text evidence="4">Inhibited by 2beta-deoxy-Kdo.</text>
</comment>
<comment type="biophysicochemical properties">
    <kinetics>
        <KM evidence="4">88.59 uM for 3-deoxy-D-manno-octulosonate</KM>
        <Vmax evidence="4">14.62 umol/min/ug enzyme</Vmax>
        <text evidence="4">kcat is 8.77 sec(-1) for 3-deoxy-D-manno-octulosonate.</text>
    </kinetics>
    <phDependence>
        <text evidence="3">Optimum pH is 9.5.</text>
    </phDependence>
</comment>
<comment type="pathway">
    <text evidence="7">Nucleotide-sugar biosynthesis; CMP-3-deoxy-D-manno-octulosonate biosynthesis; CMP-3-deoxy-D-manno-octulosonate from 3-deoxy-D-manno-octulosonate and CTP: step 1/1.</text>
</comment>
<comment type="interaction">
    <interactant intactId="EBI-25521209">
        <id>Q9C920</id>
    </interactant>
    <interactant intactId="EBI-1645478">
        <id>Q38845</id>
        <label>PP2AA1</label>
    </interactant>
    <organismsDiffer>false</organismsDiffer>
    <experiments>3</experiments>
</comment>
<comment type="subcellular location">
    <subcellularLocation>
        <location evidence="8 9">Mitochondrion outer membrane</location>
        <topology evidence="8 9">Peripheral membrane protein</topology>
    </subcellularLocation>
</comment>
<comment type="tissue specificity">
    <text evidence="2">Expressed in roots, leaves, stems and siliques.</text>
</comment>
<comment type="miscellaneous">
    <text>Rhamnogalacturonan II (RG-II) RG-II is a structurally complex pectic polysaccharide present in the primary cell wall. RG-II consists of a linear 1,4-linked a-Dgalacturonic acid backbone with four distinct side chains, two of which contain apiosyl residues. Boric acid forms a diester with two apiosyl residues from separate RG-II molecules, thereby covalently cross-linking two RG-II molecules as a dimer.</text>
</comment>
<comment type="similarity">
    <text evidence="7">Belongs to the KdsB family.</text>
</comment>
<evidence type="ECO:0000255" key="1"/>
<evidence type="ECO:0000269" key="2">
    <source>
    </source>
</evidence>
<evidence type="ECO:0000269" key="3">
    <source>
    </source>
</evidence>
<evidence type="ECO:0000269" key="4">
    <source>
    </source>
</evidence>
<evidence type="ECO:0000303" key="5">
    <source>
    </source>
</evidence>
<evidence type="ECO:0000303" key="6">
    <source ref="1"/>
</evidence>
<evidence type="ECO:0000305" key="7"/>
<evidence type="ECO:0000305" key="8">
    <source>
    </source>
</evidence>
<evidence type="ECO:0000305" key="9">
    <source>
    </source>
</evidence>
<evidence type="ECO:0000312" key="10">
    <source>
        <dbReference type="Araport" id="AT1G53000"/>
    </source>
</evidence>
<evidence type="ECO:0000312" key="11">
    <source>
        <dbReference type="EMBL" id="AAG52266.1"/>
    </source>
</evidence>
<accession>Q9C920</accession>
<organism>
    <name type="scientific">Arabidopsis thaliana</name>
    <name type="common">Mouse-ear cress</name>
    <dbReference type="NCBI Taxonomy" id="3702"/>
    <lineage>
        <taxon>Eukaryota</taxon>
        <taxon>Viridiplantae</taxon>
        <taxon>Streptophyta</taxon>
        <taxon>Embryophyta</taxon>
        <taxon>Tracheophyta</taxon>
        <taxon>Spermatophyta</taxon>
        <taxon>Magnoliopsida</taxon>
        <taxon>eudicotyledons</taxon>
        <taxon>Gunneridae</taxon>
        <taxon>Pentapetalae</taxon>
        <taxon>rosids</taxon>
        <taxon>malvids</taxon>
        <taxon>Brassicales</taxon>
        <taxon>Brassicaceae</taxon>
        <taxon>Camelineae</taxon>
        <taxon>Arabidopsis</taxon>
    </lineage>
</organism>
<keyword id="KW-0961">Cell wall biogenesis/degradation</keyword>
<keyword id="KW-0460">Magnesium</keyword>
<keyword id="KW-0472">Membrane</keyword>
<keyword id="KW-0496">Mitochondrion</keyword>
<keyword id="KW-1000">Mitochondrion outer membrane</keyword>
<keyword id="KW-0548">Nucleotidyltransferase</keyword>
<keyword id="KW-1185">Reference proteome</keyword>
<keyword id="KW-0808">Transferase</keyword>
<keyword id="KW-0809">Transit peptide</keyword>
<proteinExistence type="evidence at protein level"/>
<sequence length="290" mass="32245">MSVCSSSSSSQKTWIVNGILAGTAIAAAIGARAYLGRSKKFRSRVVGIIPARYASSRFEGKPLVQILGKPMIQRTWERSKLATTLDHIVVATDDERIAECCRGFGADVIMTSESCRNGTERCNEALEKLEKKYDVVVNIQGDEPLIEPEIIDGVVKALQVTPDAVFSTAVTSLKPEDGLDPNRVKCVVDNRGYAIYFSRGLIPYNKSGKVNPDFPYMLHLGIQSFDSKFLKVYSELQPTPLQQEEDLEQLKVLENGYKMKVIKVDHEAHGVDTPDDVEKIESLMRERNMS</sequence>
<feature type="transit peptide" description="Mitochondrion" evidence="1">
    <location>
        <begin position="1"/>
        <end position="50"/>
    </location>
</feature>
<feature type="chain" id="PRO_0000421464" description="3-deoxy-manno-octulosonate cytidylyltransferase, mitochondrial">
    <location>
        <begin position="51"/>
        <end position="290"/>
    </location>
</feature>
<dbReference type="EC" id="2.7.7.38" evidence="2"/>
<dbReference type="EMBL" id="AJ505021">
    <property type="protein sequence ID" value="CAD43603.1"/>
    <property type="molecule type" value="mRNA"/>
</dbReference>
<dbReference type="EMBL" id="AC019018">
    <property type="protein sequence ID" value="AAG52266.1"/>
    <property type="molecule type" value="Genomic_DNA"/>
</dbReference>
<dbReference type="EMBL" id="CP002684">
    <property type="protein sequence ID" value="AEE32875.1"/>
    <property type="molecule type" value="Genomic_DNA"/>
</dbReference>
<dbReference type="EMBL" id="AK317553">
    <property type="protein sequence ID" value="BAH20217.1"/>
    <property type="molecule type" value="mRNA"/>
</dbReference>
<dbReference type="RefSeq" id="NP_175708.2">
    <property type="nucleotide sequence ID" value="NM_104178.5"/>
</dbReference>
<dbReference type="SMR" id="Q9C920"/>
<dbReference type="BioGRID" id="26958">
    <property type="interactions" value="5"/>
</dbReference>
<dbReference type="FunCoup" id="Q9C920">
    <property type="interactions" value="192"/>
</dbReference>
<dbReference type="IntAct" id="Q9C920">
    <property type="interactions" value="1"/>
</dbReference>
<dbReference type="STRING" id="3702.Q9C920"/>
<dbReference type="SwissPalm" id="Q9C920"/>
<dbReference type="PaxDb" id="3702-AT1G53000.1"/>
<dbReference type="ProteomicsDB" id="237136"/>
<dbReference type="EnsemblPlants" id="AT1G53000.1">
    <property type="protein sequence ID" value="AT1G53000.1"/>
    <property type="gene ID" value="AT1G53000"/>
</dbReference>
<dbReference type="GeneID" id="841733"/>
<dbReference type="Gramene" id="AT1G53000.1">
    <property type="protein sequence ID" value="AT1G53000.1"/>
    <property type="gene ID" value="AT1G53000"/>
</dbReference>
<dbReference type="KEGG" id="ath:AT1G53000"/>
<dbReference type="Araport" id="AT1G53000"/>
<dbReference type="TAIR" id="AT1G53000">
    <property type="gene designation" value="CKS"/>
</dbReference>
<dbReference type="eggNOG" id="ENOG502QPIP">
    <property type="taxonomic scope" value="Eukaryota"/>
</dbReference>
<dbReference type="HOGENOM" id="CLU_065038_2_0_1"/>
<dbReference type="InParanoid" id="Q9C920"/>
<dbReference type="PhylomeDB" id="Q9C920"/>
<dbReference type="BRENDA" id="2.7.7.38">
    <property type="organism ID" value="399"/>
</dbReference>
<dbReference type="UniPathway" id="UPA00358">
    <property type="reaction ID" value="UER00476"/>
</dbReference>
<dbReference type="PRO" id="PR:Q9C920"/>
<dbReference type="Proteomes" id="UP000006548">
    <property type="component" value="Chromosome 1"/>
</dbReference>
<dbReference type="ExpressionAtlas" id="Q9C920">
    <property type="expression patterns" value="baseline and differential"/>
</dbReference>
<dbReference type="GO" id="GO:0005741">
    <property type="term" value="C:mitochondrial outer membrane"/>
    <property type="evidence" value="ECO:0007669"/>
    <property type="project" value="UniProtKB-SubCell"/>
</dbReference>
<dbReference type="GO" id="GO:0005739">
    <property type="term" value="C:mitochondrion"/>
    <property type="evidence" value="ECO:0000314"/>
    <property type="project" value="TAIR"/>
</dbReference>
<dbReference type="GO" id="GO:0005634">
    <property type="term" value="C:nucleus"/>
    <property type="evidence" value="ECO:0007005"/>
    <property type="project" value="TAIR"/>
</dbReference>
<dbReference type="GO" id="GO:0008690">
    <property type="term" value="F:3-deoxy-manno-octulosonate cytidylyltransferase activity"/>
    <property type="evidence" value="ECO:0000314"/>
    <property type="project" value="TAIR"/>
</dbReference>
<dbReference type="GO" id="GO:0071555">
    <property type="term" value="P:cell wall organization"/>
    <property type="evidence" value="ECO:0007669"/>
    <property type="project" value="UniProtKB-KW"/>
</dbReference>
<dbReference type="GO" id="GO:0033468">
    <property type="term" value="P:CMP-keto-3-deoxy-D-manno-octulosonic acid biosynthetic process"/>
    <property type="evidence" value="ECO:0000314"/>
    <property type="project" value="TAIR"/>
</dbReference>
<dbReference type="GO" id="GO:0009555">
    <property type="term" value="P:pollen development"/>
    <property type="evidence" value="ECO:0000315"/>
    <property type="project" value="TAIR"/>
</dbReference>
<dbReference type="GO" id="GO:0009860">
    <property type="term" value="P:pollen tube growth"/>
    <property type="evidence" value="ECO:0000315"/>
    <property type="project" value="TAIR"/>
</dbReference>
<dbReference type="CDD" id="cd02517">
    <property type="entry name" value="CMP-KDO-Synthetase"/>
    <property type="match status" value="1"/>
</dbReference>
<dbReference type="FunFam" id="3.90.550.10:FF:000011">
    <property type="entry name" value="3-deoxy-manno-octulosonate cytidylyltransferase"/>
    <property type="match status" value="1"/>
</dbReference>
<dbReference type="Gene3D" id="3.90.550.10">
    <property type="entry name" value="Spore Coat Polysaccharide Biosynthesis Protein SpsA, Chain A"/>
    <property type="match status" value="1"/>
</dbReference>
<dbReference type="HAMAP" id="MF_00057">
    <property type="entry name" value="KdsB"/>
    <property type="match status" value="1"/>
</dbReference>
<dbReference type="InterPro" id="IPR003329">
    <property type="entry name" value="Cytidylyl_trans"/>
</dbReference>
<dbReference type="InterPro" id="IPR004528">
    <property type="entry name" value="KdsB"/>
</dbReference>
<dbReference type="InterPro" id="IPR029044">
    <property type="entry name" value="Nucleotide-diphossugar_trans"/>
</dbReference>
<dbReference type="NCBIfam" id="TIGR00466">
    <property type="entry name" value="kdsB"/>
    <property type="match status" value="1"/>
</dbReference>
<dbReference type="NCBIfam" id="NF003950">
    <property type="entry name" value="PRK05450.1-3"/>
    <property type="match status" value="1"/>
</dbReference>
<dbReference type="NCBIfam" id="NF003952">
    <property type="entry name" value="PRK05450.1-5"/>
    <property type="match status" value="1"/>
</dbReference>
<dbReference type="NCBIfam" id="NF009905">
    <property type="entry name" value="PRK13368.1"/>
    <property type="match status" value="1"/>
</dbReference>
<dbReference type="PANTHER" id="PTHR42866">
    <property type="entry name" value="3-DEOXY-MANNO-OCTULOSONATE CYTIDYLYLTRANSFERASE"/>
    <property type="match status" value="1"/>
</dbReference>
<dbReference type="PANTHER" id="PTHR42866:SF2">
    <property type="entry name" value="3-DEOXY-MANNO-OCTULOSONATE CYTIDYLYLTRANSFERASE, MITOCHONDRIAL"/>
    <property type="match status" value="1"/>
</dbReference>
<dbReference type="Pfam" id="PF02348">
    <property type="entry name" value="CTP_transf_3"/>
    <property type="match status" value="1"/>
</dbReference>
<dbReference type="SUPFAM" id="SSF53448">
    <property type="entry name" value="Nucleotide-diphospho-sugar transferases"/>
    <property type="match status" value="1"/>
</dbReference>
<reference key="1">
    <citation type="submission" date="2002-08" db="EMBL/GenBank/DDBJ databases">
        <title>Cloning of Arabidopsis CMP-KDO synthetase.</title>
        <authorList>
            <person name="Wilson I.B.H."/>
        </authorList>
    </citation>
    <scope>NUCLEOTIDE SEQUENCE [MRNA]</scope>
    <source>
        <strain>cv. Columbia</strain>
    </source>
</reference>
<reference key="2">
    <citation type="journal article" date="2000" name="Nature">
        <title>Sequence and analysis of chromosome 1 of the plant Arabidopsis thaliana.</title>
        <authorList>
            <person name="Theologis A."/>
            <person name="Ecker J.R."/>
            <person name="Palm C.J."/>
            <person name="Federspiel N.A."/>
            <person name="Kaul S."/>
            <person name="White O."/>
            <person name="Alonso J."/>
            <person name="Altafi H."/>
            <person name="Araujo R."/>
            <person name="Bowman C.L."/>
            <person name="Brooks S.Y."/>
            <person name="Buehler E."/>
            <person name="Chan A."/>
            <person name="Chao Q."/>
            <person name="Chen H."/>
            <person name="Cheuk R.F."/>
            <person name="Chin C.W."/>
            <person name="Chung M.K."/>
            <person name="Conn L."/>
            <person name="Conway A.B."/>
            <person name="Conway A.R."/>
            <person name="Creasy T.H."/>
            <person name="Dewar K."/>
            <person name="Dunn P."/>
            <person name="Etgu P."/>
            <person name="Feldblyum T.V."/>
            <person name="Feng J.-D."/>
            <person name="Fong B."/>
            <person name="Fujii C.Y."/>
            <person name="Gill J.E."/>
            <person name="Goldsmith A.D."/>
            <person name="Haas B."/>
            <person name="Hansen N.F."/>
            <person name="Hughes B."/>
            <person name="Huizar L."/>
            <person name="Hunter J.L."/>
            <person name="Jenkins J."/>
            <person name="Johnson-Hopson C."/>
            <person name="Khan S."/>
            <person name="Khaykin E."/>
            <person name="Kim C.J."/>
            <person name="Koo H.L."/>
            <person name="Kremenetskaia I."/>
            <person name="Kurtz D.B."/>
            <person name="Kwan A."/>
            <person name="Lam B."/>
            <person name="Langin-Hooper S."/>
            <person name="Lee A."/>
            <person name="Lee J.M."/>
            <person name="Lenz C.A."/>
            <person name="Li J.H."/>
            <person name="Li Y.-P."/>
            <person name="Lin X."/>
            <person name="Liu S.X."/>
            <person name="Liu Z.A."/>
            <person name="Luros J.S."/>
            <person name="Maiti R."/>
            <person name="Marziali A."/>
            <person name="Militscher J."/>
            <person name="Miranda M."/>
            <person name="Nguyen M."/>
            <person name="Nierman W.C."/>
            <person name="Osborne B.I."/>
            <person name="Pai G."/>
            <person name="Peterson J."/>
            <person name="Pham P.K."/>
            <person name="Rizzo M."/>
            <person name="Rooney T."/>
            <person name="Rowley D."/>
            <person name="Sakano H."/>
            <person name="Salzberg S.L."/>
            <person name="Schwartz J.R."/>
            <person name="Shinn P."/>
            <person name="Southwick A.M."/>
            <person name="Sun H."/>
            <person name="Tallon L.J."/>
            <person name="Tambunga G."/>
            <person name="Toriumi M.J."/>
            <person name="Town C.D."/>
            <person name="Utterback T."/>
            <person name="Van Aken S."/>
            <person name="Vaysberg M."/>
            <person name="Vysotskaia V.S."/>
            <person name="Walker M."/>
            <person name="Wu D."/>
            <person name="Yu G."/>
            <person name="Fraser C.M."/>
            <person name="Venter J.C."/>
            <person name="Davis R.W."/>
        </authorList>
    </citation>
    <scope>NUCLEOTIDE SEQUENCE [LARGE SCALE GENOMIC DNA]</scope>
    <source>
        <strain>cv. Columbia</strain>
    </source>
</reference>
<reference key="3">
    <citation type="journal article" date="2017" name="Plant J.">
        <title>Araport11: a complete reannotation of the Arabidopsis thaliana reference genome.</title>
        <authorList>
            <person name="Cheng C.Y."/>
            <person name="Krishnakumar V."/>
            <person name="Chan A.P."/>
            <person name="Thibaud-Nissen F."/>
            <person name="Schobel S."/>
            <person name="Town C.D."/>
        </authorList>
    </citation>
    <scope>GENOME REANNOTATION</scope>
    <source>
        <strain>cv. Columbia</strain>
    </source>
</reference>
<reference key="4">
    <citation type="journal article" date="2009" name="DNA Res.">
        <title>Analysis of multiple occurrences of alternative splicing events in Arabidopsis thaliana using novel sequenced full-length cDNAs.</title>
        <authorList>
            <person name="Iida K."/>
            <person name="Fukami-Kobayashi K."/>
            <person name="Toyoda A."/>
            <person name="Sakaki Y."/>
            <person name="Kobayashi M."/>
            <person name="Seki M."/>
            <person name="Shinozaki K."/>
        </authorList>
    </citation>
    <scope>NUCLEOTIDE SEQUENCE [LARGE SCALE MRNA]</scope>
    <source>
        <strain>cv. Columbia</strain>
    </source>
</reference>
<reference key="5">
    <citation type="journal article" date="2009" name="J. Biosci. Bioeng.">
        <title>Cloning and characterization of cytidine monophosphate-3-deoxy-d-manno-octulosonate synthetase from Arabidopsis thaliana.</title>
        <authorList>
            <person name="Misaki R."/>
            <person name="Kajiura H."/>
            <person name="Fujii K."/>
            <person name="Fujiyama K."/>
            <person name="Seki T."/>
        </authorList>
    </citation>
    <scope>FUNCTION</scope>
    <scope>CATALYTIC ACTIVITY</scope>
    <scope>TISSUE SPECIFICITY</scope>
    <scope>COFACTOR</scope>
</reference>
<reference key="6">
    <citation type="journal article" date="2011" name="Plant Physiol.">
        <title>Multiple lines of evidence localize signaling, morphology, and lipid biosynthesis machinery to the mitochondrial outer membrane of Arabidopsis.</title>
        <authorList>
            <person name="Duncan O."/>
            <person name="Taylor N.L."/>
            <person name="Carrie C."/>
            <person name="Eubel H."/>
            <person name="Kubiszewski-Jakubiak S."/>
            <person name="Zhang B."/>
            <person name="Narsai R."/>
            <person name="Millar A.H."/>
            <person name="Whelan J."/>
        </authorList>
    </citation>
    <scope>SUBCELLULAR LOCATION</scope>
</reference>
<reference key="7">
    <citation type="journal article" date="2011" name="Plant Cell Physiol.">
        <title>Characterization of Arabidopsis CTP:3-deoxy-D-manno-2-octulosonate cytidylyltransferase (CMP-KDO synthetase), the enzyme that activates KDO during rhamnogalacturonan II biosynthesis.</title>
        <authorList>
            <person name="Kobayashi M."/>
            <person name="Kouzu N."/>
            <person name="Inami A."/>
            <person name="Toyooka K."/>
            <person name="Konishi Y."/>
            <person name="Matsuoka K."/>
            <person name="Matoh T."/>
        </authorList>
    </citation>
    <scope>FUNCTION</scope>
    <scope>BIOPHYSICOCHEMICAL PROPERTIES</scope>
    <scope>SUBCELLULAR LOCATION</scope>
</reference>
<reference key="8">
    <citation type="journal article" date="2013" name="Mol. Plant">
        <title>2beta-deoxy-Kdo is an inhibitor of the Arabidopsis thaliana CMP-2-Keto-3-deoxymanno-octulosonic acid synthetase, the enzyme required for activation of Kdo prior to incorporation into rhamnogalacturonan II.</title>
        <authorList>
            <person name="Smyth K.M."/>
            <person name="Mikolajek H."/>
            <person name="Werner J.M."/>
            <person name="Marchant A."/>
        </authorList>
    </citation>
    <scope>ACTIVITY REGULATION</scope>
    <scope>BIOPHYSICOCHEMICAL PROPERTIES</scope>
    <scope>3D-STRUCTURE MODELING</scope>
</reference>